<name>PMP20_LIPKO</name>
<keyword id="KW-0049">Antioxidant</keyword>
<keyword id="KW-1015">Disulfide bond</keyword>
<keyword id="KW-0560">Oxidoreductase</keyword>
<keyword id="KW-0575">Peroxidase</keyword>
<keyword id="KW-0676">Redox-active center</keyword>
<feature type="chain" id="PRO_0000056608" description="Putative peroxisomal peroxiredoxin">
    <location>
        <begin position="1"/>
        <end position="166"/>
    </location>
</feature>
<feature type="domain" description="Thioredoxin" evidence="2">
    <location>
        <begin position="5"/>
        <end position="166"/>
    </location>
</feature>
<feature type="active site" description="Cysteine sulfenic acid (-SOH) intermediate" evidence="1">
    <location>
        <position position="56"/>
    </location>
</feature>
<feature type="disulfide bond" description="Interchain (with C-56); in linked form" evidence="1">
    <location>
        <position position="26"/>
    </location>
</feature>
<feature type="disulfide bond" description="Interchain (with C-26); in linked form" evidence="1">
    <location>
        <position position="56"/>
    </location>
</feature>
<comment type="function">
    <text evidence="1">Thiol-specific peroxidase that catalyzes the reduction of hydrogen peroxide and organic hydroperoxides to water and alcohols, respectively. Plays a role in cell protection against oxidative stress by detoxifying peroxides and as sensor of hydrogen peroxide-mediated signaling events.</text>
</comment>
<comment type="catalytic activity">
    <reaction>
        <text>a hydroperoxide + [protein]-dithiol = [protein]-disulfide + an alcohol + H2O</text>
        <dbReference type="Rhea" id="RHEA:10008"/>
        <dbReference type="Rhea" id="RHEA-COMP:10593"/>
        <dbReference type="Rhea" id="RHEA-COMP:10594"/>
        <dbReference type="ChEBI" id="CHEBI:15377"/>
        <dbReference type="ChEBI" id="CHEBI:29950"/>
        <dbReference type="ChEBI" id="CHEBI:30879"/>
        <dbReference type="ChEBI" id="CHEBI:35924"/>
        <dbReference type="ChEBI" id="CHEBI:50058"/>
    </reaction>
</comment>
<comment type="subunit">
    <text evidence="1">Homodimer; disulfide-linked, upon oxidation.</text>
</comment>
<comment type="miscellaneous">
    <text evidence="1">The active site is a conserved redox-active cysteine residue, the peroxidatic cysteine (C(P)), which makes the nucleophilic attack on the peroxide substrate. The peroxide oxidizes the C(P)-SH to cysteine sulfenic acid (C(P)-SOH), which then reacts with another cysteine residue, the resolving cysteine (C(R)), to form a disulfide bridge. The disulfide is subsequently reduced by an appropriate electron donor to complete the catalytic cycle. In this typical 2-Cys Prx, C(R) is provided by the other dimeric subunit to form an intersubunit disulfide. The disulfide is subsequently reduced by thioredoxin.</text>
</comment>
<comment type="similarity">
    <text evidence="3">Belongs to the peroxiredoxin family. Prx5 subfamily.</text>
</comment>
<evidence type="ECO:0000250" key="1">
    <source>
        <dbReference type="UniProtKB" id="P38013"/>
    </source>
</evidence>
<evidence type="ECO:0000255" key="2">
    <source>
        <dbReference type="PROSITE-ProRule" id="PRU00691"/>
    </source>
</evidence>
<evidence type="ECO:0000305" key="3"/>
<dbReference type="EC" id="1.11.1.-"/>
<dbReference type="EMBL" id="U11244">
    <property type="protein sequence ID" value="AAB41351.1"/>
    <property type="molecule type" value="mRNA"/>
</dbReference>
<dbReference type="SMR" id="Q01116"/>
<dbReference type="GO" id="GO:0005739">
    <property type="term" value="C:mitochondrion"/>
    <property type="evidence" value="ECO:0007669"/>
    <property type="project" value="TreeGrafter"/>
</dbReference>
<dbReference type="GO" id="GO:0005777">
    <property type="term" value="C:peroxisome"/>
    <property type="evidence" value="ECO:0007669"/>
    <property type="project" value="TreeGrafter"/>
</dbReference>
<dbReference type="GO" id="GO:0008379">
    <property type="term" value="F:thioredoxin peroxidase activity"/>
    <property type="evidence" value="ECO:0007669"/>
    <property type="project" value="InterPro"/>
</dbReference>
<dbReference type="GO" id="GO:0045454">
    <property type="term" value="P:cell redox homeostasis"/>
    <property type="evidence" value="ECO:0007669"/>
    <property type="project" value="TreeGrafter"/>
</dbReference>
<dbReference type="GO" id="GO:0034599">
    <property type="term" value="P:cellular response to oxidative stress"/>
    <property type="evidence" value="ECO:0007669"/>
    <property type="project" value="InterPro"/>
</dbReference>
<dbReference type="GO" id="GO:0042744">
    <property type="term" value="P:hydrogen peroxide catabolic process"/>
    <property type="evidence" value="ECO:0007669"/>
    <property type="project" value="TreeGrafter"/>
</dbReference>
<dbReference type="CDD" id="cd03013">
    <property type="entry name" value="PRX5_like"/>
    <property type="match status" value="1"/>
</dbReference>
<dbReference type="Gene3D" id="3.40.30.10">
    <property type="entry name" value="Glutaredoxin"/>
    <property type="match status" value="1"/>
</dbReference>
<dbReference type="InterPro" id="IPR037944">
    <property type="entry name" value="PRX5-like"/>
</dbReference>
<dbReference type="InterPro" id="IPR013740">
    <property type="entry name" value="Redoxin"/>
</dbReference>
<dbReference type="InterPro" id="IPR036249">
    <property type="entry name" value="Thioredoxin-like_sf"/>
</dbReference>
<dbReference type="InterPro" id="IPR013766">
    <property type="entry name" value="Thioredoxin_domain"/>
</dbReference>
<dbReference type="PANTHER" id="PTHR10430">
    <property type="entry name" value="PEROXIREDOXIN"/>
    <property type="match status" value="1"/>
</dbReference>
<dbReference type="PANTHER" id="PTHR10430:SF16">
    <property type="entry name" value="PEROXIREDOXIN-5, MITOCHONDRIAL"/>
    <property type="match status" value="1"/>
</dbReference>
<dbReference type="Pfam" id="PF08534">
    <property type="entry name" value="Redoxin"/>
    <property type="match status" value="1"/>
</dbReference>
<dbReference type="SUPFAM" id="SSF52833">
    <property type="entry name" value="Thioredoxin-like"/>
    <property type="match status" value="1"/>
</dbReference>
<dbReference type="PROSITE" id="PS51352">
    <property type="entry name" value="THIOREDOXIN_2"/>
    <property type="match status" value="1"/>
</dbReference>
<proteinExistence type="evidence at transcript level"/>
<protein>
    <recommendedName>
        <fullName>Putative peroxisomal peroxiredoxin</fullName>
        <ecNumber>1.11.1.-</ecNumber>
    </recommendedName>
</protein>
<sequence>MTDKFPEDVKFLYIAYTPAKADITACGIPIPLDFDKEFRDKTVVIVAIPGAFTPTCTANHIPPFVEKFTALKSAGVDAVIVLSANDPFVQSAFGKALGVTDEAFIFASDPGAEFSKSAGLSLDLPPAFGTRTARYAIIVSNGVVKYVEKDSEGVAGSGVDAVLAAL</sequence>
<organism>
    <name type="scientific">Lipomyces kononenkoae</name>
    <name type="common">Yeast</name>
    <dbReference type="NCBI Taxonomy" id="34357"/>
    <lineage>
        <taxon>Eukaryota</taxon>
        <taxon>Fungi</taxon>
        <taxon>Dikarya</taxon>
        <taxon>Ascomycota</taxon>
        <taxon>Saccharomycotina</taxon>
        <taxon>Lipomycetes</taxon>
        <taxon>Lipomycetales</taxon>
        <taxon>Lipomycetaceae</taxon>
        <taxon>Lipomyces</taxon>
    </lineage>
</organism>
<accession>Q01116</accession>
<reference key="1">
    <citation type="journal article" date="1994" name="FEMS Microbiol. Lett.">
        <title>Nucleotide sequence of a putative peroxisomal protein from the yeast Lipomyces kononenkoae.</title>
        <authorList>
            <person name="Randez-Gil F."/>
            <person name="Prieto J."/>
            <person name="Sanz P."/>
        </authorList>
    </citation>
    <scope>NUCLEOTIDE SEQUENCE [MRNA]</scope>
    <source>
        <strain>ATCC 44833 / BCRC 21537 / CBS 5608 / IGC 4052 / JCM 5990 / NBRC 10376 / NRRL Y-11554</strain>
    </source>
</reference>